<dbReference type="EMBL" id="AAFI02000032">
    <property type="protein sequence ID" value="EAL67564.1"/>
    <property type="molecule type" value="Genomic_DNA"/>
</dbReference>
<dbReference type="RefSeq" id="XP_641542.1">
    <property type="nucleotide sequence ID" value="XM_636450.1"/>
</dbReference>
<dbReference type="SMR" id="Q54WB6"/>
<dbReference type="FunCoup" id="Q54WB6">
    <property type="interactions" value="17"/>
</dbReference>
<dbReference type="STRING" id="44689.Q54WB6"/>
<dbReference type="PaxDb" id="44689-DDB0304546"/>
<dbReference type="EnsemblProtists" id="EAL67564">
    <property type="protein sequence ID" value="EAL67564"/>
    <property type="gene ID" value="DDB_G0279769"/>
</dbReference>
<dbReference type="GeneID" id="8622215"/>
<dbReference type="KEGG" id="ddi:DDB_G0279769"/>
<dbReference type="dictyBase" id="DDB_G0279769">
    <property type="gene designation" value="psmG1"/>
</dbReference>
<dbReference type="VEuPathDB" id="AmoebaDB:DDB_G0279769"/>
<dbReference type="eggNOG" id="ENOG502RH4S">
    <property type="taxonomic scope" value="Eukaryota"/>
</dbReference>
<dbReference type="HOGENOM" id="CLU_1024609_0_0_1"/>
<dbReference type="InParanoid" id="Q54WB6"/>
<dbReference type="OMA" id="QAYESIC"/>
<dbReference type="Reactome" id="R-DDI-9907900">
    <property type="pathway name" value="Proteasome assembly"/>
</dbReference>
<dbReference type="PRO" id="PR:Q54WB6"/>
<dbReference type="Proteomes" id="UP000002195">
    <property type="component" value="Chromosome 3"/>
</dbReference>
<dbReference type="GO" id="GO:0005783">
    <property type="term" value="C:endoplasmic reticulum"/>
    <property type="evidence" value="ECO:0000318"/>
    <property type="project" value="GO_Central"/>
</dbReference>
<dbReference type="GO" id="GO:0070628">
    <property type="term" value="F:proteasome binding"/>
    <property type="evidence" value="ECO:0000318"/>
    <property type="project" value="GO_Central"/>
</dbReference>
<dbReference type="GO" id="GO:0080129">
    <property type="term" value="P:proteasome core complex assembly"/>
    <property type="evidence" value="ECO:0000318"/>
    <property type="project" value="GO_Central"/>
</dbReference>
<dbReference type="InterPro" id="IPR016565">
    <property type="entry name" value="Proteasome_assmbl_chp_1"/>
</dbReference>
<dbReference type="PANTHER" id="PTHR15069">
    <property type="entry name" value="PROTEASOME ASSEMBLY CHAPERONE 1"/>
    <property type="match status" value="1"/>
</dbReference>
<dbReference type="PANTHER" id="PTHR15069:SF1">
    <property type="entry name" value="PROTEASOME ASSEMBLY CHAPERONE 1"/>
    <property type="match status" value="1"/>
</dbReference>
<dbReference type="Pfam" id="PF16094">
    <property type="entry name" value="PAC1"/>
    <property type="match status" value="1"/>
</dbReference>
<accession>Q54WB6</accession>
<reference key="1">
    <citation type="journal article" date="2005" name="Nature">
        <title>The genome of the social amoeba Dictyostelium discoideum.</title>
        <authorList>
            <person name="Eichinger L."/>
            <person name="Pachebat J.A."/>
            <person name="Gloeckner G."/>
            <person name="Rajandream M.A."/>
            <person name="Sucgang R."/>
            <person name="Berriman M."/>
            <person name="Song J."/>
            <person name="Olsen R."/>
            <person name="Szafranski K."/>
            <person name="Xu Q."/>
            <person name="Tunggal B."/>
            <person name="Kummerfeld S."/>
            <person name="Madera M."/>
            <person name="Konfortov B.A."/>
            <person name="Rivero F."/>
            <person name="Bankier A.T."/>
            <person name="Lehmann R."/>
            <person name="Hamlin N."/>
            <person name="Davies R."/>
            <person name="Gaudet P."/>
            <person name="Fey P."/>
            <person name="Pilcher K."/>
            <person name="Chen G."/>
            <person name="Saunders D."/>
            <person name="Sodergren E.J."/>
            <person name="Davis P."/>
            <person name="Kerhornou A."/>
            <person name="Nie X."/>
            <person name="Hall N."/>
            <person name="Anjard C."/>
            <person name="Hemphill L."/>
            <person name="Bason N."/>
            <person name="Farbrother P."/>
            <person name="Desany B."/>
            <person name="Just E."/>
            <person name="Morio T."/>
            <person name="Rost R."/>
            <person name="Churcher C.M."/>
            <person name="Cooper J."/>
            <person name="Haydock S."/>
            <person name="van Driessche N."/>
            <person name="Cronin A."/>
            <person name="Goodhead I."/>
            <person name="Muzny D.M."/>
            <person name="Mourier T."/>
            <person name="Pain A."/>
            <person name="Lu M."/>
            <person name="Harper D."/>
            <person name="Lindsay R."/>
            <person name="Hauser H."/>
            <person name="James K.D."/>
            <person name="Quiles M."/>
            <person name="Madan Babu M."/>
            <person name="Saito T."/>
            <person name="Buchrieser C."/>
            <person name="Wardroper A."/>
            <person name="Felder M."/>
            <person name="Thangavelu M."/>
            <person name="Johnson D."/>
            <person name="Knights A."/>
            <person name="Loulseged H."/>
            <person name="Mungall K.L."/>
            <person name="Oliver K."/>
            <person name="Price C."/>
            <person name="Quail M.A."/>
            <person name="Urushihara H."/>
            <person name="Hernandez J."/>
            <person name="Rabbinowitsch E."/>
            <person name="Steffen D."/>
            <person name="Sanders M."/>
            <person name="Ma J."/>
            <person name="Kohara Y."/>
            <person name="Sharp S."/>
            <person name="Simmonds M.N."/>
            <person name="Spiegler S."/>
            <person name="Tivey A."/>
            <person name="Sugano S."/>
            <person name="White B."/>
            <person name="Walker D."/>
            <person name="Woodward J.R."/>
            <person name="Winckler T."/>
            <person name="Tanaka Y."/>
            <person name="Shaulsky G."/>
            <person name="Schleicher M."/>
            <person name="Weinstock G.M."/>
            <person name="Rosenthal A."/>
            <person name="Cox E.C."/>
            <person name="Chisholm R.L."/>
            <person name="Gibbs R.A."/>
            <person name="Loomis W.F."/>
            <person name="Platzer M."/>
            <person name="Kay R.R."/>
            <person name="Williams J.G."/>
            <person name="Dear P.H."/>
            <person name="Noegel A.A."/>
            <person name="Barrell B.G."/>
            <person name="Kuspa A."/>
        </authorList>
    </citation>
    <scope>NUCLEOTIDE SEQUENCE [LARGE SCALE GENOMIC DNA]</scope>
    <source>
        <strain>AX4</strain>
    </source>
</reference>
<feature type="chain" id="PRO_0000329457" description="Proteasome assembly chaperone 1">
    <location>
        <begin position="1"/>
        <end position="272"/>
    </location>
</feature>
<comment type="function">
    <text evidence="1">Chaperone protein which promotes assembly of the 20S proteasome as part of a heterodimer with psmg2.</text>
</comment>
<comment type="subunit">
    <text evidence="1">Forms a heterodimer with psmg2.</text>
</comment>
<comment type="similarity">
    <text evidence="2">Belongs to the PSMG1 family.</text>
</comment>
<name>PSMG1_DICDI</name>
<organism>
    <name type="scientific">Dictyostelium discoideum</name>
    <name type="common">Social amoeba</name>
    <dbReference type="NCBI Taxonomy" id="44689"/>
    <lineage>
        <taxon>Eukaryota</taxon>
        <taxon>Amoebozoa</taxon>
        <taxon>Evosea</taxon>
        <taxon>Eumycetozoa</taxon>
        <taxon>Dictyostelia</taxon>
        <taxon>Dictyosteliales</taxon>
        <taxon>Dictyosteliaceae</taxon>
        <taxon>Dictyostelium</taxon>
    </lineage>
</organism>
<proteinExistence type="inferred from homology"/>
<gene>
    <name type="primary">psmG1</name>
    <name type="ORF">DDB_G0279769</name>
</gene>
<protein>
    <recommendedName>
        <fullName>Proteasome assembly chaperone 1</fullName>
    </recommendedName>
</protein>
<evidence type="ECO:0000250" key="1"/>
<evidence type="ECO:0000305" key="2"/>
<keyword id="KW-0143">Chaperone</keyword>
<keyword id="KW-1185">Reference proteome</keyword>
<sequence>MFGFEIQPVRSRNWEIEEEEDQEVVSVEIPKPSISFVNDNYKLEFNNNNDTPFNIIVSTNGSPSIFVKGCFESNQFDEIADISYSDIKPLKTTNTNTVLNNKCTVYRHKIEKSMIFITVQYDLPSERCFGFTELVLNTFKNVSQVLVLDKILNTHYLSQNYTHPIPPFTRAIFNSLFKNDYSLTPLESSNIIENLSASFLTICQVKYIPACSILNLYESHLNIESVQSFTPIVKSIYPQLFNNSSLKQEDITSQFKLMINALNKRNDKGMYM</sequence>